<comment type="function">
    <text>Major role in the synthesis of nucleoside triphosphates other than ATP. The ATP gamma phosphate is transferred to the NDP beta phosphate via a ping-pong mechanism, using a phosphorylated active-site intermediate.</text>
</comment>
<comment type="catalytic activity">
    <reaction>
        <text>a 2'-deoxyribonucleoside 5'-diphosphate + ATP = a 2'-deoxyribonucleoside 5'-triphosphate + ADP</text>
        <dbReference type="Rhea" id="RHEA:44640"/>
        <dbReference type="ChEBI" id="CHEBI:30616"/>
        <dbReference type="ChEBI" id="CHEBI:61560"/>
        <dbReference type="ChEBI" id="CHEBI:73316"/>
        <dbReference type="ChEBI" id="CHEBI:456216"/>
        <dbReference type="EC" id="2.7.4.6"/>
    </reaction>
</comment>
<comment type="catalytic activity">
    <reaction>
        <text>a ribonucleoside 5'-diphosphate + ATP = a ribonucleoside 5'-triphosphate + ADP</text>
        <dbReference type="Rhea" id="RHEA:18113"/>
        <dbReference type="ChEBI" id="CHEBI:30616"/>
        <dbReference type="ChEBI" id="CHEBI:57930"/>
        <dbReference type="ChEBI" id="CHEBI:61557"/>
        <dbReference type="ChEBI" id="CHEBI:456216"/>
        <dbReference type="EC" id="2.7.4.6"/>
    </reaction>
</comment>
<comment type="cofactor">
    <cofactor evidence="1">
        <name>Mg(2+)</name>
        <dbReference type="ChEBI" id="CHEBI:18420"/>
    </cofactor>
</comment>
<comment type="similarity">
    <text evidence="2">Belongs to the NDK family.</text>
</comment>
<comment type="sequence caution" evidence="2">
    <conflict type="erroneous gene model prediction">
        <sequence resource="EMBL-CDS" id="EAA58872"/>
    </conflict>
</comment>
<protein>
    <recommendedName>
        <fullName>Nucleoside diphosphate kinase</fullName>
        <shortName>NDP kinase</shortName>
        <ecNumber>2.7.4.6</ecNumber>
    </recommendedName>
    <alternativeName>
        <fullName>AnNDK</fullName>
        <shortName>NDK</shortName>
    </alternativeName>
</protein>
<accession>Q8TFN0</accession>
<accession>C8V781</accession>
<accession>Q5AU14</accession>
<reference key="1">
    <citation type="submission" date="2001-09" db="EMBL/GenBank/DDBJ databases">
        <title>Aspergillus nidulans swoH is a putative nucleoside diphosphate kinase.</title>
        <authorList>
            <person name="Lin X."/>
            <person name="Momany M."/>
        </authorList>
    </citation>
    <scope>NUCLEOTIDE SEQUENCE [GENOMIC DNA]</scope>
</reference>
<reference key="2">
    <citation type="journal article" date="2005" name="Nature">
        <title>Sequencing of Aspergillus nidulans and comparative analysis with A. fumigatus and A. oryzae.</title>
        <authorList>
            <person name="Galagan J.E."/>
            <person name="Calvo S.E."/>
            <person name="Cuomo C."/>
            <person name="Ma L.-J."/>
            <person name="Wortman J.R."/>
            <person name="Batzoglou S."/>
            <person name="Lee S.-I."/>
            <person name="Bastuerkmen M."/>
            <person name="Spevak C.C."/>
            <person name="Clutterbuck J."/>
            <person name="Kapitonov V."/>
            <person name="Jurka J."/>
            <person name="Scazzocchio C."/>
            <person name="Farman M.L."/>
            <person name="Butler J."/>
            <person name="Purcell S."/>
            <person name="Harris S."/>
            <person name="Braus G.H."/>
            <person name="Draht O."/>
            <person name="Busch S."/>
            <person name="D'Enfert C."/>
            <person name="Bouchier C."/>
            <person name="Goldman G.H."/>
            <person name="Bell-Pedersen D."/>
            <person name="Griffiths-Jones S."/>
            <person name="Doonan J.H."/>
            <person name="Yu J."/>
            <person name="Vienken K."/>
            <person name="Pain A."/>
            <person name="Freitag M."/>
            <person name="Selker E.U."/>
            <person name="Archer D.B."/>
            <person name="Penalva M.A."/>
            <person name="Oakley B.R."/>
            <person name="Momany M."/>
            <person name="Tanaka T."/>
            <person name="Kumagai T."/>
            <person name="Asai K."/>
            <person name="Machida M."/>
            <person name="Nierman W.C."/>
            <person name="Denning D.W."/>
            <person name="Caddick M.X."/>
            <person name="Hynes M."/>
            <person name="Paoletti M."/>
            <person name="Fischer R."/>
            <person name="Miller B.L."/>
            <person name="Dyer P.S."/>
            <person name="Sachs M.S."/>
            <person name="Osmani S.A."/>
            <person name="Birren B.W."/>
        </authorList>
    </citation>
    <scope>NUCLEOTIDE SEQUENCE [LARGE SCALE GENOMIC DNA]</scope>
    <source>
        <strain>FGSC A4 / ATCC 38163 / CBS 112.46 / NRRL 194 / M139</strain>
    </source>
</reference>
<reference key="3">
    <citation type="journal article" date="2009" name="Fungal Genet. Biol.">
        <title>The 2008 update of the Aspergillus nidulans genome annotation: a community effort.</title>
        <authorList>
            <person name="Wortman J.R."/>
            <person name="Gilsenan J.M."/>
            <person name="Joardar V."/>
            <person name="Deegan J."/>
            <person name="Clutterbuck J."/>
            <person name="Andersen M.R."/>
            <person name="Archer D."/>
            <person name="Bencina M."/>
            <person name="Braus G."/>
            <person name="Coutinho P."/>
            <person name="von Dohren H."/>
            <person name="Doonan J."/>
            <person name="Driessen A.J."/>
            <person name="Durek P."/>
            <person name="Espeso E."/>
            <person name="Fekete E."/>
            <person name="Flipphi M."/>
            <person name="Estrada C.G."/>
            <person name="Geysens S."/>
            <person name="Goldman G."/>
            <person name="de Groot P.W."/>
            <person name="Hansen K."/>
            <person name="Harris S.D."/>
            <person name="Heinekamp T."/>
            <person name="Helmstaedt K."/>
            <person name="Henrissat B."/>
            <person name="Hofmann G."/>
            <person name="Homan T."/>
            <person name="Horio T."/>
            <person name="Horiuchi H."/>
            <person name="James S."/>
            <person name="Jones M."/>
            <person name="Karaffa L."/>
            <person name="Karanyi Z."/>
            <person name="Kato M."/>
            <person name="Keller N."/>
            <person name="Kelly D.E."/>
            <person name="Kiel J.A."/>
            <person name="Kim J.M."/>
            <person name="van der Klei I.J."/>
            <person name="Klis F.M."/>
            <person name="Kovalchuk A."/>
            <person name="Krasevec N."/>
            <person name="Kubicek C.P."/>
            <person name="Liu B."/>
            <person name="Maccabe A."/>
            <person name="Meyer V."/>
            <person name="Mirabito P."/>
            <person name="Miskei M."/>
            <person name="Mos M."/>
            <person name="Mullins J."/>
            <person name="Nelson D.R."/>
            <person name="Nielsen J."/>
            <person name="Oakley B.R."/>
            <person name="Osmani S.A."/>
            <person name="Pakula T."/>
            <person name="Paszewski A."/>
            <person name="Paulsen I."/>
            <person name="Pilsyk S."/>
            <person name="Pocsi I."/>
            <person name="Punt P.J."/>
            <person name="Ram A.F."/>
            <person name="Ren Q."/>
            <person name="Robellet X."/>
            <person name="Robson G."/>
            <person name="Seiboth B."/>
            <person name="van Solingen P."/>
            <person name="Specht T."/>
            <person name="Sun J."/>
            <person name="Taheri-Talesh N."/>
            <person name="Takeshita N."/>
            <person name="Ussery D."/>
            <person name="vanKuyk P.A."/>
            <person name="Visser H."/>
            <person name="van de Vondervoort P.J."/>
            <person name="de Vries R.P."/>
            <person name="Walton J."/>
            <person name="Xiang X."/>
            <person name="Xiong Y."/>
            <person name="Zeng A.P."/>
            <person name="Brandt B.W."/>
            <person name="Cornell M.J."/>
            <person name="van den Hondel C.A."/>
            <person name="Visser J."/>
            <person name="Oliver S.G."/>
            <person name="Turner G."/>
        </authorList>
    </citation>
    <scope>GENOME REANNOTATION</scope>
    <source>
        <strain>FGSC A4 / ATCC 38163 / CBS 112.46 / NRRL 194 / M139</strain>
    </source>
</reference>
<proteinExistence type="inferred from homology"/>
<feature type="chain" id="PRO_0000137150" description="Nucleoside diphosphate kinase">
    <location>
        <begin position="1"/>
        <end position="153"/>
    </location>
</feature>
<feature type="active site" description="Pros-phosphohistidine intermediate" evidence="1">
    <location>
        <position position="117"/>
    </location>
</feature>
<feature type="binding site" evidence="1">
    <location>
        <position position="11"/>
    </location>
    <ligand>
        <name>ATP</name>
        <dbReference type="ChEBI" id="CHEBI:30616"/>
    </ligand>
</feature>
<feature type="binding site" evidence="1">
    <location>
        <position position="59"/>
    </location>
    <ligand>
        <name>ATP</name>
        <dbReference type="ChEBI" id="CHEBI:30616"/>
    </ligand>
</feature>
<feature type="binding site" evidence="1">
    <location>
        <position position="87"/>
    </location>
    <ligand>
        <name>ATP</name>
        <dbReference type="ChEBI" id="CHEBI:30616"/>
    </ligand>
</feature>
<feature type="binding site" evidence="1">
    <location>
        <position position="93"/>
    </location>
    <ligand>
        <name>ATP</name>
        <dbReference type="ChEBI" id="CHEBI:30616"/>
    </ligand>
</feature>
<feature type="binding site" evidence="1">
    <location>
        <position position="104"/>
    </location>
    <ligand>
        <name>ATP</name>
        <dbReference type="ChEBI" id="CHEBI:30616"/>
    </ligand>
</feature>
<feature type="binding site" evidence="1">
    <location>
        <position position="114"/>
    </location>
    <ligand>
        <name>ATP</name>
        <dbReference type="ChEBI" id="CHEBI:30616"/>
    </ligand>
</feature>
<organism>
    <name type="scientific">Emericella nidulans (strain FGSC A4 / ATCC 38163 / CBS 112.46 / NRRL 194 / M139)</name>
    <name type="common">Aspergillus nidulans</name>
    <dbReference type="NCBI Taxonomy" id="227321"/>
    <lineage>
        <taxon>Eukaryota</taxon>
        <taxon>Fungi</taxon>
        <taxon>Dikarya</taxon>
        <taxon>Ascomycota</taxon>
        <taxon>Pezizomycotina</taxon>
        <taxon>Eurotiomycetes</taxon>
        <taxon>Eurotiomycetidae</taxon>
        <taxon>Eurotiales</taxon>
        <taxon>Aspergillaceae</taxon>
        <taxon>Aspergillus</taxon>
        <taxon>Aspergillus subgen. Nidulantes</taxon>
    </lineage>
</organism>
<sequence length="153" mass="16908">MTSEQTFIAIKPDGVQRGLVGPIISRFENRGFKLAAMKLTSPSRSLLEQHYSDLKEKPFFPGLVTYMLSGPIVAMVWEGKDVVKTGRTILGATNPLASAPGTIRGDFAIDVGRNVCHGSDSVESAKKEIGLWFTPEEIQNYKLNAFGWIYEKE</sequence>
<dbReference type="EC" id="2.7.4.6"/>
<dbReference type="EMBL" id="AY057453">
    <property type="protein sequence ID" value="AAL23684.1"/>
    <property type="molecule type" value="Genomic_DNA"/>
</dbReference>
<dbReference type="EMBL" id="AACD01000144">
    <property type="protein sequence ID" value="EAA58872.1"/>
    <property type="status" value="ALT_SEQ"/>
    <property type="molecule type" value="Genomic_DNA"/>
</dbReference>
<dbReference type="EMBL" id="BN001302">
    <property type="protein sequence ID" value="CBF74127.1"/>
    <property type="molecule type" value="Genomic_DNA"/>
</dbReference>
<dbReference type="RefSeq" id="XP_681485.1">
    <property type="nucleotide sequence ID" value="XM_676393.1"/>
</dbReference>
<dbReference type="SMR" id="Q8TFN0"/>
<dbReference type="FunCoup" id="Q8TFN0">
    <property type="interactions" value="862"/>
</dbReference>
<dbReference type="STRING" id="227321.Q8TFN0"/>
<dbReference type="EnsemblFungi" id="CBF74127">
    <property type="protein sequence ID" value="CBF74127"/>
    <property type="gene ID" value="ANIA_08216"/>
</dbReference>
<dbReference type="KEGG" id="ani:ANIA_08216"/>
<dbReference type="VEuPathDB" id="FungiDB:AN8216"/>
<dbReference type="eggNOG" id="KOG0888">
    <property type="taxonomic scope" value="Eukaryota"/>
</dbReference>
<dbReference type="HOGENOM" id="CLU_060216_6_3_1"/>
<dbReference type="InParanoid" id="Q8TFN0"/>
<dbReference type="OMA" id="QHYGEHK"/>
<dbReference type="OrthoDB" id="2162449at2759"/>
<dbReference type="Proteomes" id="UP000000560">
    <property type="component" value="Chromosome II"/>
</dbReference>
<dbReference type="GO" id="GO:0005576">
    <property type="term" value="C:extracellular region"/>
    <property type="evidence" value="ECO:0000314"/>
    <property type="project" value="AspGD"/>
</dbReference>
<dbReference type="GO" id="GO:0005524">
    <property type="term" value="F:ATP binding"/>
    <property type="evidence" value="ECO:0007669"/>
    <property type="project" value="UniProtKB-KW"/>
</dbReference>
<dbReference type="GO" id="GO:0046872">
    <property type="term" value="F:metal ion binding"/>
    <property type="evidence" value="ECO:0007669"/>
    <property type="project" value="UniProtKB-KW"/>
</dbReference>
<dbReference type="GO" id="GO:0004550">
    <property type="term" value="F:nucleoside diphosphate kinase activity"/>
    <property type="evidence" value="ECO:0007669"/>
    <property type="project" value="UniProtKB-EC"/>
</dbReference>
<dbReference type="GO" id="GO:0051211">
    <property type="term" value="P:anisotropic cell growth"/>
    <property type="evidence" value="ECO:0000315"/>
    <property type="project" value="AspGD"/>
</dbReference>
<dbReference type="GO" id="GO:0006241">
    <property type="term" value="P:CTP biosynthetic process"/>
    <property type="evidence" value="ECO:0007669"/>
    <property type="project" value="InterPro"/>
</dbReference>
<dbReference type="GO" id="GO:0006183">
    <property type="term" value="P:GTP biosynthetic process"/>
    <property type="evidence" value="ECO:0007669"/>
    <property type="project" value="InterPro"/>
</dbReference>
<dbReference type="GO" id="GO:0009142">
    <property type="term" value="P:nucleoside triphosphate biosynthetic process"/>
    <property type="evidence" value="ECO:0000314"/>
    <property type="project" value="AspGD"/>
</dbReference>
<dbReference type="GO" id="GO:0006228">
    <property type="term" value="P:UTP biosynthetic process"/>
    <property type="evidence" value="ECO:0007669"/>
    <property type="project" value="InterPro"/>
</dbReference>
<dbReference type="CDD" id="cd04413">
    <property type="entry name" value="NDPk_I"/>
    <property type="match status" value="1"/>
</dbReference>
<dbReference type="FunFam" id="3.30.70.141:FF:000002">
    <property type="entry name" value="Nucleoside diphosphate kinase"/>
    <property type="match status" value="1"/>
</dbReference>
<dbReference type="Gene3D" id="3.30.70.141">
    <property type="entry name" value="Nucleoside diphosphate kinase-like domain"/>
    <property type="match status" value="1"/>
</dbReference>
<dbReference type="HAMAP" id="MF_00451">
    <property type="entry name" value="NDP_kinase"/>
    <property type="match status" value="1"/>
</dbReference>
<dbReference type="InterPro" id="IPR034907">
    <property type="entry name" value="NDK-like_dom"/>
</dbReference>
<dbReference type="InterPro" id="IPR036850">
    <property type="entry name" value="NDK-like_dom_sf"/>
</dbReference>
<dbReference type="InterPro" id="IPR001564">
    <property type="entry name" value="Nucleoside_diP_kinase"/>
</dbReference>
<dbReference type="InterPro" id="IPR023005">
    <property type="entry name" value="Nucleoside_diP_kinase_AS"/>
</dbReference>
<dbReference type="NCBIfam" id="NF001908">
    <property type="entry name" value="PRK00668.1"/>
    <property type="match status" value="1"/>
</dbReference>
<dbReference type="PANTHER" id="PTHR11349">
    <property type="entry name" value="NUCLEOSIDE DIPHOSPHATE KINASE"/>
    <property type="match status" value="1"/>
</dbReference>
<dbReference type="Pfam" id="PF00334">
    <property type="entry name" value="NDK"/>
    <property type="match status" value="1"/>
</dbReference>
<dbReference type="PRINTS" id="PR01243">
    <property type="entry name" value="NUCDPKINASE"/>
</dbReference>
<dbReference type="SMART" id="SM00562">
    <property type="entry name" value="NDK"/>
    <property type="match status" value="1"/>
</dbReference>
<dbReference type="SUPFAM" id="SSF54919">
    <property type="entry name" value="Nucleoside diphosphate kinase, NDK"/>
    <property type="match status" value="1"/>
</dbReference>
<dbReference type="PROSITE" id="PS00469">
    <property type="entry name" value="NDPK"/>
    <property type="match status" value="1"/>
</dbReference>
<dbReference type="PROSITE" id="PS51374">
    <property type="entry name" value="NDPK_LIKE"/>
    <property type="match status" value="1"/>
</dbReference>
<name>NDK_EMENI</name>
<keyword id="KW-0067">ATP-binding</keyword>
<keyword id="KW-0418">Kinase</keyword>
<keyword id="KW-0460">Magnesium</keyword>
<keyword id="KW-0479">Metal-binding</keyword>
<keyword id="KW-0546">Nucleotide metabolism</keyword>
<keyword id="KW-0547">Nucleotide-binding</keyword>
<keyword id="KW-0597">Phosphoprotein</keyword>
<keyword id="KW-1185">Reference proteome</keyword>
<keyword id="KW-0808">Transferase</keyword>
<evidence type="ECO:0000250" key="1"/>
<evidence type="ECO:0000305" key="2"/>
<gene>
    <name type="primary">swoH</name>
    <name type="ORF">AN8216</name>
</gene>